<dbReference type="EC" id="6.3.5.-" evidence="1"/>
<dbReference type="EMBL" id="AP006627">
    <property type="protein sequence ID" value="BAD63634.1"/>
    <property type="molecule type" value="Genomic_DNA"/>
</dbReference>
<dbReference type="RefSeq" id="WP_011245949.1">
    <property type="nucleotide sequence ID" value="NC_006582.1"/>
</dbReference>
<dbReference type="SMR" id="Q5WJ21"/>
<dbReference type="STRING" id="66692.ABC1096"/>
<dbReference type="KEGG" id="bcl:ABC1096"/>
<dbReference type="eggNOG" id="COG0721">
    <property type="taxonomic scope" value="Bacteria"/>
</dbReference>
<dbReference type="HOGENOM" id="CLU_105899_6_1_9"/>
<dbReference type="OrthoDB" id="9813938at2"/>
<dbReference type="Proteomes" id="UP000001168">
    <property type="component" value="Chromosome"/>
</dbReference>
<dbReference type="GO" id="GO:0050566">
    <property type="term" value="F:asparaginyl-tRNA synthase (glutamine-hydrolyzing) activity"/>
    <property type="evidence" value="ECO:0007669"/>
    <property type="project" value="RHEA"/>
</dbReference>
<dbReference type="GO" id="GO:0005524">
    <property type="term" value="F:ATP binding"/>
    <property type="evidence" value="ECO:0007669"/>
    <property type="project" value="UniProtKB-KW"/>
</dbReference>
<dbReference type="GO" id="GO:0050567">
    <property type="term" value="F:glutaminyl-tRNA synthase (glutamine-hydrolyzing) activity"/>
    <property type="evidence" value="ECO:0007669"/>
    <property type="project" value="UniProtKB-UniRule"/>
</dbReference>
<dbReference type="GO" id="GO:0070681">
    <property type="term" value="P:glutaminyl-tRNAGln biosynthesis via transamidation"/>
    <property type="evidence" value="ECO:0007669"/>
    <property type="project" value="TreeGrafter"/>
</dbReference>
<dbReference type="GO" id="GO:0006450">
    <property type="term" value="P:regulation of translational fidelity"/>
    <property type="evidence" value="ECO:0007669"/>
    <property type="project" value="InterPro"/>
</dbReference>
<dbReference type="GO" id="GO:0006412">
    <property type="term" value="P:translation"/>
    <property type="evidence" value="ECO:0007669"/>
    <property type="project" value="UniProtKB-UniRule"/>
</dbReference>
<dbReference type="Gene3D" id="1.10.20.60">
    <property type="entry name" value="Glu-tRNAGln amidotransferase C subunit, N-terminal domain"/>
    <property type="match status" value="1"/>
</dbReference>
<dbReference type="HAMAP" id="MF_00122">
    <property type="entry name" value="GatC"/>
    <property type="match status" value="1"/>
</dbReference>
<dbReference type="InterPro" id="IPR036113">
    <property type="entry name" value="Asp/Glu-ADT_sf_sub_c"/>
</dbReference>
<dbReference type="InterPro" id="IPR003837">
    <property type="entry name" value="GatC"/>
</dbReference>
<dbReference type="NCBIfam" id="TIGR00135">
    <property type="entry name" value="gatC"/>
    <property type="match status" value="1"/>
</dbReference>
<dbReference type="PANTHER" id="PTHR15004">
    <property type="entry name" value="GLUTAMYL-TRNA(GLN) AMIDOTRANSFERASE SUBUNIT C, MITOCHONDRIAL"/>
    <property type="match status" value="1"/>
</dbReference>
<dbReference type="PANTHER" id="PTHR15004:SF0">
    <property type="entry name" value="GLUTAMYL-TRNA(GLN) AMIDOTRANSFERASE SUBUNIT C, MITOCHONDRIAL"/>
    <property type="match status" value="1"/>
</dbReference>
<dbReference type="Pfam" id="PF02686">
    <property type="entry name" value="GatC"/>
    <property type="match status" value="1"/>
</dbReference>
<dbReference type="SUPFAM" id="SSF141000">
    <property type="entry name" value="Glu-tRNAGln amidotransferase C subunit"/>
    <property type="match status" value="1"/>
</dbReference>
<accession>Q5WJ21</accession>
<protein>
    <recommendedName>
        <fullName evidence="1">Aspartyl/glutamyl-tRNA(Asn/Gln) amidotransferase subunit C</fullName>
        <shortName evidence="1">Asp/Glu-ADT subunit C</shortName>
        <ecNumber evidence="1">6.3.5.-</ecNumber>
    </recommendedName>
</protein>
<reference key="1">
    <citation type="submission" date="2003-10" db="EMBL/GenBank/DDBJ databases">
        <title>The complete genome sequence of the alkaliphilic Bacillus clausii KSM-K16.</title>
        <authorList>
            <person name="Takaki Y."/>
            <person name="Kageyama Y."/>
            <person name="Shimamura S."/>
            <person name="Suzuki H."/>
            <person name="Nishi S."/>
            <person name="Hatada Y."/>
            <person name="Kawai S."/>
            <person name="Ito S."/>
            <person name="Horikoshi K."/>
        </authorList>
    </citation>
    <scope>NUCLEOTIDE SEQUENCE [LARGE SCALE GENOMIC DNA]</scope>
    <source>
        <strain>KSM-K16</strain>
    </source>
</reference>
<proteinExistence type="inferred from homology"/>
<gene>
    <name evidence="1" type="primary">gatC</name>
    <name type="ordered locus">ABC1096</name>
</gene>
<feature type="chain" id="PRO_1000016072" description="Aspartyl/glutamyl-tRNA(Asn/Gln) amidotransferase subunit C">
    <location>
        <begin position="1"/>
        <end position="95"/>
    </location>
</feature>
<sequence>MSRISKEQVKHVAHLARLAITEEEAETFRNQLEDIITAAEQLNEVDTEGVVPTTHVLQMHNVLREDKPEKGLEVKEVLKNAPDHEDGQIRVPSVF</sequence>
<organism>
    <name type="scientific">Shouchella clausii (strain KSM-K16)</name>
    <name type="common">Alkalihalobacillus clausii</name>
    <dbReference type="NCBI Taxonomy" id="66692"/>
    <lineage>
        <taxon>Bacteria</taxon>
        <taxon>Bacillati</taxon>
        <taxon>Bacillota</taxon>
        <taxon>Bacilli</taxon>
        <taxon>Bacillales</taxon>
        <taxon>Bacillaceae</taxon>
        <taxon>Shouchella</taxon>
    </lineage>
</organism>
<keyword id="KW-0067">ATP-binding</keyword>
<keyword id="KW-0436">Ligase</keyword>
<keyword id="KW-0547">Nucleotide-binding</keyword>
<keyword id="KW-0648">Protein biosynthesis</keyword>
<keyword id="KW-1185">Reference proteome</keyword>
<comment type="function">
    <text evidence="1">Allows the formation of correctly charged Asn-tRNA(Asn) or Gln-tRNA(Gln) through the transamidation of misacylated Asp-tRNA(Asn) or Glu-tRNA(Gln) in organisms which lack either or both of asparaginyl-tRNA or glutaminyl-tRNA synthetases. The reaction takes place in the presence of glutamine and ATP through an activated phospho-Asp-tRNA(Asn) or phospho-Glu-tRNA(Gln).</text>
</comment>
<comment type="catalytic activity">
    <reaction evidence="1">
        <text>L-glutamyl-tRNA(Gln) + L-glutamine + ATP + H2O = L-glutaminyl-tRNA(Gln) + L-glutamate + ADP + phosphate + H(+)</text>
        <dbReference type="Rhea" id="RHEA:17521"/>
        <dbReference type="Rhea" id="RHEA-COMP:9681"/>
        <dbReference type="Rhea" id="RHEA-COMP:9684"/>
        <dbReference type="ChEBI" id="CHEBI:15377"/>
        <dbReference type="ChEBI" id="CHEBI:15378"/>
        <dbReference type="ChEBI" id="CHEBI:29985"/>
        <dbReference type="ChEBI" id="CHEBI:30616"/>
        <dbReference type="ChEBI" id="CHEBI:43474"/>
        <dbReference type="ChEBI" id="CHEBI:58359"/>
        <dbReference type="ChEBI" id="CHEBI:78520"/>
        <dbReference type="ChEBI" id="CHEBI:78521"/>
        <dbReference type="ChEBI" id="CHEBI:456216"/>
    </reaction>
</comment>
<comment type="catalytic activity">
    <reaction evidence="1">
        <text>L-aspartyl-tRNA(Asn) + L-glutamine + ATP + H2O = L-asparaginyl-tRNA(Asn) + L-glutamate + ADP + phosphate + 2 H(+)</text>
        <dbReference type="Rhea" id="RHEA:14513"/>
        <dbReference type="Rhea" id="RHEA-COMP:9674"/>
        <dbReference type="Rhea" id="RHEA-COMP:9677"/>
        <dbReference type="ChEBI" id="CHEBI:15377"/>
        <dbReference type="ChEBI" id="CHEBI:15378"/>
        <dbReference type="ChEBI" id="CHEBI:29985"/>
        <dbReference type="ChEBI" id="CHEBI:30616"/>
        <dbReference type="ChEBI" id="CHEBI:43474"/>
        <dbReference type="ChEBI" id="CHEBI:58359"/>
        <dbReference type="ChEBI" id="CHEBI:78515"/>
        <dbReference type="ChEBI" id="CHEBI:78516"/>
        <dbReference type="ChEBI" id="CHEBI:456216"/>
    </reaction>
</comment>
<comment type="subunit">
    <text evidence="1">Heterotrimer of A, B and C subunits.</text>
</comment>
<comment type="similarity">
    <text evidence="1">Belongs to the GatC family.</text>
</comment>
<name>GATC_SHOC1</name>
<evidence type="ECO:0000255" key="1">
    <source>
        <dbReference type="HAMAP-Rule" id="MF_00122"/>
    </source>
</evidence>